<proteinExistence type="evidence at transcript level"/>
<dbReference type="EMBL" id="X52080">
    <property type="protein sequence ID" value="CAA36299.1"/>
    <property type="molecule type" value="Genomic_DNA"/>
</dbReference>
<dbReference type="PIR" id="S08463">
    <property type="entry name" value="MMCWTF"/>
</dbReference>
<dbReference type="RefSeq" id="WP_009872844.1">
    <property type="nucleotide sequence ID" value="NZ_CSTK01000001.1"/>
</dbReference>
<dbReference type="eggNOG" id="ENOG502ZVFZ">
    <property type="taxonomic scope" value="Bacteria"/>
</dbReference>
<dbReference type="GO" id="GO:0009279">
    <property type="term" value="C:cell outer membrane"/>
    <property type="evidence" value="ECO:0007669"/>
    <property type="project" value="UniProtKB-SubCell"/>
</dbReference>
<dbReference type="GO" id="GO:0046930">
    <property type="term" value="C:pore complex"/>
    <property type="evidence" value="ECO:0007669"/>
    <property type="project" value="UniProtKB-KW"/>
</dbReference>
<dbReference type="GO" id="GO:0015288">
    <property type="term" value="F:porin activity"/>
    <property type="evidence" value="ECO:0007669"/>
    <property type="project" value="UniProtKB-KW"/>
</dbReference>
<dbReference type="GO" id="GO:0005198">
    <property type="term" value="F:structural molecule activity"/>
    <property type="evidence" value="ECO:0007669"/>
    <property type="project" value="InterPro"/>
</dbReference>
<dbReference type="GO" id="GO:0006811">
    <property type="term" value="P:monoatomic ion transport"/>
    <property type="evidence" value="ECO:0007669"/>
    <property type="project" value="UniProtKB-KW"/>
</dbReference>
<dbReference type="GO" id="GO:0008360">
    <property type="term" value="P:regulation of cell shape"/>
    <property type="evidence" value="ECO:0007669"/>
    <property type="project" value="UniProtKB-KW"/>
</dbReference>
<dbReference type="InterPro" id="IPR000604">
    <property type="entry name" value="Major_OMP_Chlamydia"/>
</dbReference>
<dbReference type="Pfam" id="PF01308">
    <property type="entry name" value="Chlam_OMP"/>
    <property type="match status" value="1"/>
</dbReference>
<dbReference type="PRINTS" id="PR01334">
    <property type="entry name" value="CHLAMIDIAOMP"/>
</dbReference>
<name>MOMPF_CHLTH</name>
<comment type="function">
    <text evidence="1">In elementary bodies (EBs, the infectious stage, which is able to survive outside the host cell) provides the structural integrity of the outer envelope through disulfide cross-links with the small cysteine-rich protein and the large cysteine-rich periplasmic protein. It has been described in publications as the Sarkosyl-insoluble COMC (Chlamydia outer membrane complex), and serves as the functional equivalent of peptidoglycan (By similarity).</text>
</comment>
<comment type="function">
    <text evidence="1">Permits diffusion of specific solutes through the outer membrane.</text>
</comment>
<comment type="subunit">
    <text>Part of a disulfide cross-linked outer membrane complex (COMC) composed of the major outer membrane porin (MOMP), the small cysteine-rich protein (OmcA) and the large cysteine-rich periplasmic protein (OmcB).</text>
</comment>
<comment type="subcellular location">
    <subcellularLocation>
        <location evidence="1">Cell outer membrane</location>
        <topology evidence="1">Multi-pass membrane protein</topology>
    </subcellularLocation>
</comment>
<comment type="developmental stage">
    <text>It is present but some of the disulfide bonds are reduced in reticulate bodies (RBs).</text>
</comment>
<comment type="similarity">
    <text evidence="2">Belongs to the chlamydial porin (CP) (TC 1.B.2) family.</text>
</comment>
<accession>P16155</accession>
<feature type="signal peptide">
    <location>
        <begin position="1"/>
        <end position="22"/>
    </location>
</feature>
<feature type="chain" id="PRO_0000020149" description="Major outer membrane porin, serovar F">
    <location>
        <begin position="23"/>
        <end position="395"/>
    </location>
</feature>
<gene>
    <name type="primary">ompA</name>
    <name type="synonym">omp1F</name>
</gene>
<protein>
    <recommendedName>
        <fullName>Major outer membrane porin, serovar F</fullName>
        <shortName>MOMP</shortName>
    </recommendedName>
</protein>
<keyword id="KW-0998">Cell outer membrane</keyword>
<keyword id="KW-0133">Cell shape</keyword>
<keyword id="KW-1015">Disulfide bond</keyword>
<keyword id="KW-0406">Ion transport</keyword>
<keyword id="KW-0472">Membrane</keyword>
<keyword id="KW-0626">Porin</keyword>
<keyword id="KW-0732">Signal</keyword>
<keyword id="KW-0812">Transmembrane</keyword>
<keyword id="KW-1134">Transmembrane beta strand</keyword>
<keyword id="KW-0813">Transport</keyword>
<organism>
    <name type="scientific">Chlamydia trachomatis</name>
    <dbReference type="NCBI Taxonomy" id="813"/>
    <lineage>
        <taxon>Bacteria</taxon>
        <taxon>Pseudomonadati</taxon>
        <taxon>Chlamydiota</taxon>
        <taxon>Chlamydiia</taxon>
        <taxon>Chlamydiales</taxon>
        <taxon>Chlamydiaceae</taxon>
        <taxon>Chlamydia/Chlamydophila group</taxon>
        <taxon>Chlamydia</taxon>
    </lineage>
</organism>
<sequence>MKKLLKSVLVFAALSSASSLQALPVGNPAEPSLMIDGILWEGFGGDPCDPCTTWCDAISMRMGYYGDFVFDRVLKTDVNKEFEMGEALAGASGNTTSTLSKLVERTNPAYGKHMQDAEMFTNAACMTLNIWDRFDVFCTLGATSGYLKGNSASFNLVGLFGDGVNATKPAADSIPNVQLNQSVVELYTDTTFAWSVGARAALWECGCATLGASFQYAQSKPKIEELNVLCNAAEFTINKPKGYVGKEFPLDLTAGTDAATGTKDASIDYHEWQASLSLSYRLNMFTPYIGVKWSRASFDSDTIRIAQPRLVTPVVDITTLNPTIAGCGSVAGANTEGQISDTMQIVSLQLNKMKSRKSCGIAVGTTIVDADKYAVTVETRLIDERAAHVNAQFRF</sequence>
<reference key="1">
    <citation type="journal article" date="1990" name="Nucleic Acids Res.">
        <title>The nucleotide sequence of major outer membrane protein gene of Chlamydia trachomatis serovar F.</title>
        <authorList>
            <person name="Zhang Y.-X."/>
            <person name="Morrison S.G."/>
            <person name="Caldwell H.D."/>
        </authorList>
    </citation>
    <scope>NUCLEOTIDE SEQUENCE [GENOMIC DNA]</scope>
    <source>
        <strain>IC-CAL3 / Serovar F</strain>
    </source>
</reference>
<evidence type="ECO:0000250" key="1"/>
<evidence type="ECO:0000305" key="2"/>